<gene>
    <name type="ordered locus">sll0982</name>
</gene>
<keyword id="KW-0175">Coiled coil</keyword>
<keyword id="KW-0472">Membrane</keyword>
<keyword id="KW-1185">Reference proteome</keyword>
<keyword id="KW-0793">Thylakoid</keyword>
<dbReference type="EMBL" id="BA000022">
    <property type="protein sequence ID" value="BAA17178.1"/>
    <property type="molecule type" value="Genomic_DNA"/>
</dbReference>
<dbReference type="PIR" id="S75264">
    <property type="entry name" value="S75264"/>
</dbReference>
<dbReference type="SMR" id="P73152"/>
<dbReference type="IntAct" id="P73152">
    <property type="interactions" value="3"/>
</dbReference>
<dbReference type="STRING" id="1148.gene:10498041"/>
<dbReference type="PaxDb" id="1148-1652255"/>
<dbReference type="EnsemblBacteria" id="BAA17178">
    <property type="protein sequence ID" value="BAA17178"/>
    <property type="gene ID" value="BAA17178"/>
</dbReference>
<dbReference type="KEGG" id="syn:sll0982"/>
<dbReference type="eggNOG" id="COG3937">
    <property type="taxonomic scope" value="Bacteria"/>
</dbReference>
<dbReference type="InParanoid" id="P73152"/>
<dbReference type="Proteomes" id="UP000001425">
    <property type="component" value="Chromosome"/>
</dbReference>
<dbReference type="GO" id="GO:0031676">
    <property type="term" value="C:plasma membrane-derived thylakoid membrane"/>
    <property type="evidence" value="ECO:0007669"/>
    <property type="project" value="UniProtKB-SubCell"/>
</dbReference>
<organism>
    <name type="scientific">Synechocystis sp. (strain ATCC 27184 / PCC 6803 / Kazusa)</name>
    <dbReference type="NCBI Taxonomy" id="1111708"/>
    <lineage>
        <taxon>Bacteria</taxon>
        <taxon>Bacillati</taxon>
        <taxon>Cyanobacteriota</taxon>
        <taxon>Cyanophyceae</taxon>
        <taxon>Synechococcales</taxon>
        <taxon>Merismopediaceae</taxon>
        <taxon>Synechocystis</taxon>
    </lineage>
</organism>
<feature type="chain" id="PRO_0000352750" description="Uncharacterized thylakoid-associated protein sll0982">
    <location>
        <begin position="1"/>
        <end position="128"/>
    </location>
</feature>
<feature type="coiled-coil region" evidence="1">
    <location>
        <begin position="95"/>
        <end position="123"/>
    </location>
</feature>
<name>Y982_SYNY3</name>
<accession>P73152</accession>
<proteinExistence type="predicted"/>
<protein>
    <recommendedName>
        <fullName>Uncharacterized thylakoid-associated protein sll0982</fullName>
    </recommendedName>
</protein>
<reference key="1">
    <citation type="journal article" date="1996" name="DNA Res.">
        <title>Sequence analysis of the genome of the unicellular cyanobacterium Synechocystis sp. strain PCC6803. II. Sequence determination of the entire genome and assignment of potential protein-coding regions.</title>
        <authorList>
            <person name="Kaneko T."/>
            <person name="Sato S."/>
            <person name="Kotani H."/>
            <person name="Tanaka A."/>
            <person name="Asamizu E."/>
            <person name="Nakamura Y."/>
            <person name="Miyajima N."/>
            <person name="Hirosawa M."/>
            <person name="Sugiura M."/>
            <person name="Sasamoto S."/>
            <person name="Kimura T."/>
            <person name="Hosouchi T."/>
            <person name="Matsuno A."/>
            <person name="Muraki A."/>
            <person name="Nakazaki N."/>
            <person name="Naruo K."/>
            <person name="Okumura S."/>
            <person name="Shimpo S."/>
            <person name="Takeuchi C."/>
            <person name="Wada T."/>
            <person name="Watanabe A."/>
            <person name="Yamada M."/>
            <person name="Yasuda M."/>
            <person name="Tabata S."/>
        </authorList>
    </citation>
    <scope>NUCLEOTIDE SEQUENCE [LARGE SCALE GENOMIC DNA]</scope>
    <source>
        <strain>ATCC 27184 / PCC 6803 / Kazusa</strain>
    </source>
</reference>
<reference key="2">
    <citation type="journal article" date="2005" name="Proteomics">
        <title>Proteomic studies of the thylakoid membrane of Synechocystis sp. PCC 6803.</title>
        <authorList>
            <person name="Srivastava R."/>
            <person name="Pisareva T."/>
            <person name="Norling B."/>
        </authorList>
    </citation>
    <scope>SUBCELLULAR LOCATION IN THYLAKOID</scope>
</reference>
<sequence>MTTNNSTLLDTIQQGFRITVGATASLVETLQDPQKRQGTFQDLQQEWDQRASQWAQKGTTTETEARQYVDQLLAQWRQSLPNPLSKTTATGSNNIIDFATAKRELDRLTEEIATLKGELAQDKPGTEG</sequence>
<comment type="subcellular location">
    <subcellularLocation>
        <location evidence="2">Cellular thylakoid membrane</location>
        <topology evidence="2">Peripheral membrane protein</topology>
        <orientation evidence="2">Cytoplasmic side</orientation>
    </subcellularLocation>
</comment>
<evidence type="ECO:0000255" key="1"/>
<evidence type="ECO:0000305" key="2">
    <source>
    </source>
</evidence>